<feature type="chain" id="PRO_0000076306" description="Probable RNA-directed DNA polymerase from transposon X-element">
    <location>
        <begin position="1"/>
        <end position="908"/>
    </location>
</feature>
<feature type="domain" description="Reverse transcriptase" evidence="3">
    <location>
        <begin position="481"/>
        <end position="752"/>
    </location>
</feature>
<feature type="region of interest" description="Disordered" evidence="4">
    <location>
        <begin position="883"/>
        <end position="908"/>
    </location>
</feature>
<comment type="catalytic activity">
    <reaction evidence="2 3">
        <text>DNA(n) + a 2'-deoxyribonucleoside 5'-triphosphate = DNA(n+1) + diphosphate</text>
        <dbReference type="Rhea" id="RHEA:22508"/>
        <dbReference type="Rhea" id="RHEA-COMP:17339"/>
        <dbReference type="Rhea" id="RHEA-COMP:17340"/>
        <dbReference type="ChEBI" id="CHEBI:33019"/>
        <dbReference type="ChEBI" id="CHEBI:61560"/>
        <dbReference type="ChEBI" id="CHEBI:173112"/>
        <dbReference type="EC" id="2.7.7.49"/>
    </reaction>
</comment>
<comment type="cofactor">
    <cofactor evidence="1">
        <name>Mg(2+)</name>
        <dbReference type="ChEBI" id="CHEBI:18420"/>
    </cofactor>
</comment>
<comment type="cofactor">
    <cofactor evidence="1">
        <name>Mn(2+)</name>
        <dbReference type="ChEBI" id="CHEBI:29035"/>
    </cofactor>
</comment>
<comment type="miscellaneous">
    <text evidence="2">At least 30 copies of X-element are present in the genome and some elements are polymorphic between different strains.</text>
</comment>
<organism>
    <name type="scientific">Drosophila melanogaster</name>
    <name type="common">Fruit fly</name>
    <dbReference type="NCBI Taxonomy" id="7227"/>
    <lineage>
        <taxon>Eukaryota</taxon>
        <taxon>Metazoa</taxon>
        <taxon>Ecdysozoa</taxon>
        <taxon>Arthropoda</taxon>
        <taxon>Hexapoda</taxon>
        <taxon>Insecta</taxon>
        <taxon>Pterygota</taxon>
        <taxon>Neoptera</taxon>
        <taxon>Endopterygota</taxon>
        <taxon>Diptera</taxon>
        <taxon>Brachycera</taxon>
        <taxon>Muscomorpha</taxon>
        <taxon>Ephydroidea</taxon>
        <taxon>Drosophilidae</taxon>
        <taxon>Drosophila</taxon>
        <taxon>Sophophora</taxon>
    </lineage>
</organism>
<reference evidence="5" key="1">
    <citation type="journal article" date="2001" name="Mol. Genet. Genomics">
        <title>The X element, a novel LINE transposable element from Drosophila melanogaster.</title>
        <authorList>
            <person name="Tudor M."/>
            <person name="Davis A.J."/>
            <person name="Feldman M."/>
            <person name="Grammatikaki M."/>
            <person name="O'Hare K."/>
        </authorList>
    </citation>
    <scope>NUCLEOTIDE SEQUENCE [GENOMIC DNA]</scope>
</reference>
<dbReference type="EC" id="2.7.7.49"/>
<dbReference type="EMBL" id="AF237761">
    <property type="protein sequence ID" value="AAF81411.1"/>
    <property type="molecule type" value="Genomic_DNA"/>
</dbReference>
<dbReference type="SMR" id="Q9NBX4"/>
<dbReference type="FlyBase" id="FBgn0041612">
    <property type="gene designation" value="X-element\ORF2"/>
</dbReference>
<dbReference type="PRO" id="PR:Q9NBX4"/>
<dbReference type="GO" id="GO:0003964">
    <property type="term" value="F:RNA-directed DNA polymerase activity"/>
    <property type="evidence" value="ECO:0000315"/>
    <property type="project" value="UniProtKB"/>
</dbReference>
<dbReference type="GO" id="GO:0006313">
    <property type="term" value="P:DNA transposition"/>
    <property type="evidence" value="ECO:0000315"/>
    <property type="project" value="UniProtKB"/>
</dbReference>
<dbReference type="CDD" id="cd01650">
    <property type="entry name" value="RT_nLTR_like"/>
    <property type="match status" value="1"/>
</dbReference>
<dbReference type="FunFam" id="3.60.10.10:FF:000163">
    <property type="entry name" value="Probable RNA-directed DNA polymerase from transposon BS"/>
    <property type="match status" value="1"/>
</dbReference>
<dbReference type="Gene3D" id="3.60.10.10">
    <property type="entry name" value="Endonuclease/exonuclease/phosphatase"/>
    <property type="match status" value="1"/>
</dbReference>
<dbReference type="InterPro" id="IPR043502">
    <property type="entry name" value="DNA/RNA_pol_sf"/>
</dbReference>
<dbReference type="InterPro" id="IPR036691">
    <property type="entry name" value="Endo/exonu/phosph_ase_sf"/>
</dbReference>
<dbReference type="InterPro" id="IPR005135">
    <property type="entry name" value="Endo/exonuclease/phosphatase"/>
</dbReference>
<dbReference type="InterPro" id="IPR052560">
    <property type="entry name" value="RdDP_mobile_element"/>
</dbReference>
<dbReference type="InterPro" id="IPR000477">
    <property type="entry name" value="RT_dom"/>
</dbReference>
<dbReference type="PANTHER" id="PTHR36688">
    <property type="entry name" value="ENDO/EXONUCLEASE/PHOSPHATASE DOMAIN-CONTAINING PROTEIN"/>
    <property type="match status" value="1"/>
</dbReference>
<dbReference type="PANTHER" id="PTHR36688:SF2">
    <property type="entry name" value="ENDONUCLEASE_EXONUCLEASE_PHOSPHATASE DOMAIN-CONTAINING PROTEIN"/>
    <property type="match status" value="1"/>
</dbReference>
<dbReference type="Pfam" id="PF03372">
    <property type="entry name" value="Exo_endo_phos"/>
    <property type="match status" value="1"/>
</dbReference>
<dbReference type="Pfam" id="PF00078">
    <property type="entry name" value="RVT_1"/>
    <property type="match status" value="1"/>
</dbReference>
<dbReference type="SUPFAM" id="SSF56672">
    <property type="entry name" value="DNA/RNA polymerases"/>
    <property type="match status" value="1"/>
</dbReference>
<dbReference type="SUPFAM" id="SSF56219">
    <property type="entry name" value="DNase I-like"/>
    <property type="match status" value="1"/>
</dbReference>
<dbReference type="PROSITE" id="PS50878">
    <property type="entry name" value="RT_POL"/>
    <property type="match status" value="1"/>
</dbReference>
<sequence>MMPLRILVWNADGVSTKLPEVECFVRRHEIDVLLLSETHCKGAETPKLFGFVAYTANDPSGGNAKGGAAILIKNSLAHFPLTPIATAKVQLAPAVIETALGPISFGAVYCPPRFAWTTDEFKDILEEFQTKFIVAGDWNASHWLWGAGRSNQRGIALANLVLNSEVDSLATGGPTRYPYGCRGSPGYIDFALTKGVLGIHANISAVVELSSDHLPLVITLDAGAISYPKMERLITRRTNLEVFQSQLESTLPLNTAINSGQDVDDAIELLTNNIKSAARLATRSISRQPAADRIPIPREILLLIAEKRRLRTRWMRSRHPSDKTEWNRALSRLRCALVLHKAAWFDERLANTGVESEATHSLWKATRAIKRRCTRKAPLVDSNGTWCRTDLGQAEVFAAHLAERFQPFKLASLQQVEETQDQLNQALQMDMPITPFEPCEVAEVIVRQSNNKAPGHDVICNATLKALPRQAILYITLVFNAIVRLQYFPYQWKLGIISMIHKPGKPEREPASYRPISLLPSISKVFERLIAVRIVSIMEAQGITPEHQFGFRAGHCTVEQLHRVVEQILTAYDSKEYCNSLFLDIREAFDRVWHIGLQLKIKQTLPAPYFGLLKSYLEGRRFAVRFHSAISTEHNVAAGVPQGSVLGPLLYCLYSHDMPQPDVSLYGKSMLATFADDVCVTYRSRCEHDAADGIQDFAYRFSEWARRWNIGINSSKSNNVCFTLKRRTPPPVYIEEVPVPQPNAAKYLGVLLDRRLTFSKHVTDIRTRLRAKVAKHYWLLSSRSKLSLSNKLTIYKQILAPNWKYGCQIWGLACDSHIKRIQAIQNKVARLITGCEWFVRNTTLHRDLKLATVFDEINKHSSRYHDRLERHRNRLASALNRSRPPRRLNRRQPRDLITRSPLTRVRRS</sequence>
<name>RTXE_DROME</name>
<proteinExistence type="inferred from homology"/>
<accession>Q9NBX4</accession>
<gene>
    <name type="primary">X-element\ORF2</name>
    <name type="synonym">ORF2</name>
</gene>
<evidence type="ECO:0000250" key="1"/>
<evidence type="ECO:0000250" key="2">
    <source>
        <dbReference type="UniProtKB" id="P21328"/>
    </source>
</evidence>
<evidence type="ECO:0000255" key="3">
    <source>
        <dbReference type="PROSITE-ProRule" id="PRU00405"/>
    </source>
</evidence>
<evidence type="ECO:0000256" key="4">
    <source>
        <dbReference type="SAM" id="MobiDB-lite"/>
    </source>
</evidence>
<evidence type="ECO:0000312" key="5">
    <source>
        <dbReference type="EMBL" id="AAF81411.1"/>
    </source>
</evidence>
<keyword id="KW-0548">Nucleotidyltransferase</keyword>
<keyword id="KW-0695">RNA-directed DNA polymerase</keyword>
<keyword id="KW-0808">Transferase</keyword>
<keyword id="KW-0814">Transposable element</keyword>
<protein>
    <recommendedName>
        <fullName>Probable RNA-directed DNA polymerase from transposon X-element</fullName>
        <ecNumber>2.7.7.49</ecNumber>
    </recommendedName>
    <alternativeName>
        <fullName>Reverse transcriptase</fullName>
    </alternativeName>
</protein>